<keyword id="KW-0903">Direct protein sequencing</keyword>
<keyword id="KW-0560">Oxidoreductase</keyword>
<feature type="chain" id="PRO_0000097125" description="Pyruvate synthase subunit PorA">
    <location>
        <begin position="1"/>
        <end position="402"/>
    </location>
</feature>
<dbReference type="EC" id="1.2.7.1"/>
<dbReference type="EMBL" id="CP000099">
    <property type="protein sequence ID" value="AAZ69968.1"/>
    <property type="molecule type" value="Genomic_DNA"/>
</dbReference>
<dbReference type="PIR" id="S65416">
    <property type="entry name" value="S65416"/>
</dbReference>
<dbReference type="SMR" id="P80521"/>
<dbReference type="STRING" id="269797.Mbar_A1000"/>
<dbReference type="PaxDb" id="269797-Mbar_A1000"/>
<dbReference type="KEGG" id="mba:Mbar_A1000"/>
<dbReference type="eggNOG" id="arCOG01608">
    <property type="taxonomic scope" value="Archaea"/>
</dbReference>
<dbReference type="HOGENOM" id="CLU_002569_5_0_2"/>
<dbReference type="OrthoDB" id="372068at2157"/>
<dbReference type="BRENDA" id="1.2.7.1">
    <property type="organism ID" value="3250"/>
</dbReference>
<dbReference type="GO" id="GO:0019164">
    <property type="term" value="F:pyruvate synthase activity"/>
    <property type="evidence" value="ECO:0007669"/>
    <property type="project" value="UniProtKB-EC"/>
</dbReference>
<dbReference type="GO" id="GO:0006979">
    <property type="term" value="P:response to oxidative stress"/>
    <property type="evidence" value="ECO:0007669"/>
    <property type="project" value="TreeGrafter"/>
</dbReference>
<dbReference type="CDD" id="cd07034">
    <property type="entry name" value="TPP_PYR_PFOR_IOR-alpha_like"/>
    <property type="match status" value="1"/>
</dbReference>
<dbReference type="FunFam" id="3.40.50.920:FF:000010">
    <property type="entry name" value="Pyruvate ferredoxin oxidoreductase, alpha subunit"/>
    <property type="match status" value="1"/>
</dbReference>
<dbReference type="FunFam" id="3.40.50.970:FF:000012">
    <property type="entry name" value="Pyruvate:ferredoxin (Flavodoxin) oxidoreductase"/>
    <property type="match status" value="1"/>
</dbReference>
<dbReference type="Gene3D" id="3.40.50.920">
    <property type="match status" value="1"/>
</dbReference>
<dbReference type="Gene3D" id="3.40.50.970">
    <property type="match status" value="1"/>
</dbReference>
<dbReference type="InterPro" id="IPR033412">
    <property type="entry name" value="PFOR_II"/>
</dbReference>
<dbReference type="InterPro" id="IPR050722">
    <property type="entry name" value="Pyruvate:ferred/Flavod_OxRd"/>
</dbReference>
<dbReference type="InterPro" id="IPR053390">
    <property type="entry name" value="Pyruvate_synthase_PorA"/>
</dbReference>
<dbReference type="InterPro" id="IPR002880">
    <property type="entry name" value="Pyrv_Fd/Flavodoxin_OxRdtase_N"/>
</dbReference>
<dbReference type="InterPro" id="IPR029061">
    <property type="entry name" value="THDP-binding"/>
</dbReference>
<dbReference type="InterPro" id="IPR009014">
    <property type="entry name" value="Transketo_C/PFOR_II"/>
</dbReference>
<dbReference type="NCBIfam" id="NF040682">
    <property type="entry name" value="PorA_Arch"/>
    <property type="match status" value="1"/>
</dbReference>
<dbReference type="PANTHER" id="PTHR32154">
    <property type="entry name" value="PYRUVATE-FLAVODOXIN OXIDOREDUCTASE-RELATED"/>
    <property type="match status" value="1"/>
</dbReference>
<dbReference type="PANTHER" id="PTHR32154:SF0">
    <property type="entry name" value="PYRUVATE-FLAVODOXIN OXIDOREDUCTASE-RELATED"/>
    <property type="match status" value="1"/>
</dbReference>
<dbReference type="Pfam" id="PF17147">
    <property type="entry name" value="PFOR_II"/>
    <property type="match status" value="1"/>
</dbReference>
<dbReference type="Pfam" id="PF01855">
    <property type="entry name" value="POR_N"/>
    <property type="match status" value="1"/>
</dbReference>
<dbReference type="SUPFAM" id="SSF52518">
    <property type="entry name" value="Thiamin diphosphate-binding fold (THDP-binding)"/>
    <property type="match status" value="1"/>
</dbReference>
<dbReference type="SUPFAM" id="SSF52922">
    <property type="entry name" value="TK C-terminal domain-like"/>
    <property type="match status" value="1"/>
</dbReference>
<reference key="1">
    <citation type="journal article" date="2006" name="J. Bacteriol.">
        <title>The Methanosarcina barkeri genome: comparative analysis with Methanosarcina acetivorans and Methanosarcina mazei reveals extensive rearrangement within methanosarcinal genomes.</title>
        <authorList>
            <person name="Maeder D.L."/>
            <person name="Anderson I."/>
            <person name="Brettin T.S."/>
            <person name="Bruce D.C."/>
            <person name="Gilna P."/>
            <person name="Han C.S."/>
            <person name="Lapidus A."/>
            <person name="Metcalf W.W."/>
            <person name="Saunders E."/>
            <person name="Tapia R."/>
            <person name="Sowers K.R."/>
        </authorList>
    </citation>
    <scope>NUCLEOTIDE SEQUENCE [LARGE SCALE GENOMIC DNA]</scope>
    <source>
        <strain>Fusaro / DSM 804</strain>
    </source>
</reference>
<reference key="2">
    <citation type="journal article" date="1996" name="Eur. J. Biochem.">
        <title>Catalytic properties, molecular composition and sequence alignments of pyruvate: ferredoxin oxidoreductase from the methanogenic archaeon Methanosarcina barkeri (strain Fusaro).</title>
        <authorList>
            <person name="Bock A.-K."/>
            <person name="Kunow J."/>
            <person name="Glasemacher J."/>
            <person name="Schoenheit P."/>
        </authorList>
    </citation>
    <scope>PROTEIN SEQUENCE OF 1-38</scope>
</reference>
<comment type="catalytic activity">
    <reaction>
        <text>2 oxidized [2Fe-2S]-[ferredoxin] + pyruvate + CoA = 2 reduced [2Fe-2S]-[ferredoxin] + acetyl-CoA + CO2 + H(+)</text>
        <dbReference type="Rhea" id="RHEA:12765"/>
        <dbReference type="Rhea" id="RHEA-COMP:10000"/>
        <dbReference type="Rhea" id="RHEA-COMP:10001"/>
        <dbReference type="ChEBI" id="CHEBI:15361"/>
        <dbReference type="ChEBI" id="CHEBI:15378"/>
        <dbReference type="ChEBI" id="CHEBI:16526"/>
        <dbReference type="ChEBI" id="CHEBI:33737"/>
        <dbReference type="ChEBI" id="CHEBI:33738"/>
        <dbReference type="ChEBI" id="CHEBI:57287"/>
        <dbReference type="ChEBI" id="CHEBI:57288"/>
        <dbReference type="EC" id="1.2.7.1"/>
    </reaction>
</comment>
<comment type="subunit">
    <text>Heterotetramer of one alpha, one beta, one delta and one gamma chain.</text>
</comment>
<comment type="miscellaneous">
    <text>It also catalyzes the oxidation of 2-oxobutyrate.</text>
</comment>
<protein>
    <recommendedName>
        <fullName>Pyruvate synthase subunit PorA</fullName>
        <ecNumber>1.2.7.1</ecNumber>
    </recommendedName>
    <alternativeName>
        <fullName>Pyruvate oxidoreductase alpha chain</fullName>
        <shortName>POR</shortName>
    </alternativeName>
    <alternativeName>
        <fullName>Pyruvic-ferredoxin oxidoreductase subunit alpha</fullName>
    </alternativeName>
</protein>
<sequence length="402" mass="44503">MIDPAYRKKMVVVEGSYAVAHSAKVCRPNVISAYPITPQTHIVEHLSQFMADGEIPNCEYVNVEAEFSAISALIGASAVGARTYSATTSQGLLLMHEALFNTSGMRLPVVMTVANRAVSAPINIWNDHQDAIAQRDTGWMQLYVEDVQEACDTLPQLYKIAEDNEIMVPGMVCMDGFILSHVYEPVVLLEQDLTDNFLPPFQPEDILDPEDPKTFGAFASPDTYEEFRYLHEQAMQKALPKIEATAKEFEEVYGRYHGGLIDGYMLDDAEIVVMAMGSILGTVKDVVDKYRAKGEKIGVLKVRSFRPFPKEQICKAVKNAHAVVVLDKNISIGTNEGALFTETKSCLYNSKVRVPVIGYTIGHGGRDIPVESIAKVIEETKKVAKSGITIESQFMDLKEELL</sequence>
<proteinExistence type="evidence at protein level"/>
<gene>
    <name type="primary">porA</name>
    <name type="ordered locus">Mbar_A1000</name>
</gene>
<organism>
    <name type="scientific">Methanosarcina barkeri (strain Fusaro / DSM 804)</name>
    <dbReference type="NCBI Taxonomy" id="269797"/>
    <lineage>
        <taxon>Archaea</taxon>
        <taxon>Methanobacteriati</taxon>
        <taxon>Methanobacteriota</taxon>
        <taxon>Stenosarchaea group</taxon>
        <taxon>Methanomicrobia</taxon>
        <taxon>Methanosarcinales</taxon>
        <taxon>Methanosarcinaceae</taxon>
        <taxon>Methanosarcina</taxon>
    </lineage>
</organism>
<accession>P80521</accession>
<accession>Q46DS4</accession>
<name>PORA_METBF</name>